<sequence length="160" mass="18801">MRKKRNKNLYGEVYALGQHISMSAHKARRVIDQIRGRSYEETLMILELMPYRACYPIFKLVYSAAANASHNMGFNEASLVISKAEVNEGTTMKKLKPRARGRSYAIKRPTCHIRIVLKDKSFYEEENFFCLKQSEWKKKKKYTDMTYHYMDKGGGLWDKK</sequence>
<name>RK22_EUCGG</name>
<dbReference type="EMBL" id="AY780259">
    <property type="protein sequence ID" value="AAX21066.1"/>
    <property type="molecule type" value="Genomic_DNA"/>
</dbReference>
<dbReference type="RefSeq" id="YP_636338.1">
    <property type="nucleotide sequence ID" value="NC_008115.1"/>
</dbReference>
<dbReference type="SMR" id="Q49KV9"/>
<dbReference type="GeneID" id="4108488"/>
<dbReference type="GO" id="GO:0009507">
    <property type="term" value="C:chloroplast"/>
    <property type="evidence" value="ECO:0007669"/>
    <property type="project" value="UniProtKB-SubCell"/>
</dbReference>
<dbReference type="GO" id="GO:0015934">
    <property type="term" value="C:large ribosomal subunit"/>
    <property type="evidence" value="ECO:0007669"/>
    <property type="project" value="InterPro"/>
</dbReference>
<dbReference type="GO" id="GO:0019843">
    <property type="term" value="F:rRNA binding"/>
    <property type="evidence" value="ECO:0007669"/>
    <property type="project" value="UniProtKB-UniRule"/>
</dbReference>
<dbReference type="GO" id="GO:0003735">
    <property type="term" value="F:structural constituent of ribosome"/>
    <property type="evidence" value="ECO:0007669"/>
    <property type="project" value="InterPro"/>
</dbReference>
<dbReference type="GO" id="GO:0006412">
    <property type="term" value="P:translation"/>
    <property type="evidence" value="ECO:0007669"/>
    <property type="project" value="UniProtKB-UniRule"/>
</dbReference>
<dbReference type="CDD" id="cd00336">
    <property type="entry name" value="Ribosomal_L22"/>
    <property type="match status" value="1"/>
</dbReference>
<dbReference type="FunFam" id="3.90.470.10:FF:000006">
    <property type="entry name" value="50S ribosomal protein L22, chloroplastic"/>
    <property type="match status" value="1"/>
</dbReference>
<dbReference type="Gene3D" id="3.90.470.10">
    <property type="entry name" value="Ribosomal protein L22/L17"/>
    <property type="match status" value="1"/>
</dbReference>
<dbReference type="HAMAP" id="MF_01331_B">
    <property type="entry name" value="Ribosomal_uL22_B"/>
    <property type="match status" value="1"/>
</dbReference>
<dbReference type="InterPro" id="IPR001063">
    <property type="entry name" value="Ribosomal_uL22"/>
</dbReference>
<dbReference type="InterPro" id="IPR005727">
    <property type="entry name" value="Ribosomal_uL22_bac/chlpt-type"/>
</dbReference>
<dbReference type="InterPro" id="IPR047867">
    <property type="entry name" value="Ribosomal_uL22_bac/org-type"/>
</dbReference>
<dbReference type="InterPro" id="IPR018260">
    <property type="entry name" value="Ribosomal_uL22_CS"/>
</dbReference>
<dbReference type="InterPro" id="IPR036394">
    <property type="entry name" value="Ribosomal_uL22_sf"/>
</dbReference>
<dbReference type="NCBIfam" id="TIGR01044">
    <property type="entry name" value="rplV_bact"/>
    <property type="match status" value="1"/>
</dbReference>
<dbReference type="PANTHER" id="PTHR13501">
    <property type="entry name" value="CHLOROPLAST 50S RIBOSOMAL PROTEIN L22-RELATED"/>
    <property type="match status" value="1"/>
</dbReference>
<dbReference type="PANTHER" id="PTHR13501:SF10">
    <property type="entry name" value="LARGE RIBOSOMAL SUBUNIT PROTEIN UL22M"/>
    <property type="match status" value="1"/>
</dbReference>
<dbReference type="Pfam" id="PF00237">
    <property type="entry name" value="Ribosomal_L22"/>
    <property type="match status" value="1"/>
</dbReference>
<dbReference type="SUPFAM" id="SSF54843">
    <property type="entry name" value="Ribosomal protein L22"/>
    <property type="match status" value="1"/>
</dbReference>
<dbReference type="PROSITE" id="PS00464">
    <property type="entry name" value="RIBOSOMAL_L22"/>
    <property type="match status" value="1"/>
</dbReference>
<accession>Q49KV9</accession>
<protein>
    <recommendedName>
        <fullName evidence="2">Large ribosomal subunit protein uL22c</fullName>
    </recommendedName>
    <alternativeName>
        <fullName>50S ribosomal protein L22, chloroplastic</fullName>
    </alternativeName>
</protein>
<geneLocation type="chloroplast"/>
<gene>
    <name type="primary">rpl22</name>
</gene>
<organism>
    <name type="scientific">Eucalyptus globulus subsp. globulus</name>
    <name type="common">Tasmanian blue gum</name>
    <dbReference type="NCBI Taxonomy" id="71271"/>
    <lineage>
        <taxon>Eukaryota</taxon>
        <taxon>Viridiplantae</taxon>
        <taxon>Streptophyta</taxon>
        <taxon>Embryophyta</taxon>
        <taxon>Tracheophyta</taxon>
        <taxon>Spermatophyta</taxon>
        <taxon>Magnoliopsida</taxon>
        <taxon>eudicotyledons</taxon>
        <taxon>Gunneridae</taxon>
        <taxon>Pentapetalae</taxon>
        <taxon>rosids</taxon>
        <taxon>malvids</taxon>
        <taxon>Myrtales</taxon>
        <taxon>Myrtaceae</taxon>
        <taxon>Myrtoideae</taxon>
        <taxon>Eucalypteae</taxon>
        <taxon>Eucalyptus</taxon>
    </lineage>
</organism>
<reference key="1">
    <citation type="journal article" date="2005" name="DNA Res.">
        <title>Complete nucleotide sequence of the chloroplast genome from the Tasmanian blue gum, Eucalyptus globulus (Myrtaceae).</title>
        <authorList>
            <person name="Steane D.A."/>
        </authorList>
    </citation>
    <scope>NUCLEOTIDE SEQUENCE [LARGE SCALE GENOMIC DNA]</scope>
</reference>
<keyword id="KW-0150">Chloroplast</keyword>
<keyword id="KW-0934">Plastid</keyword>
<keyword id="KW-0687">Ribonucleoprotein</keyword>
<keyword id="KW-0689">Ribosomal protein</keyword>
<keyword id="KW-0694">RNA-binding</keyword>
<keyword id="KW-0699">rRNA-binding</keyword>
<feature type="chain" id="PRO_0000243237" description="Large ribosomal subunit protein uL22c">
    <location>
        <begin position="1"/>
        <end position="160"/>
    </location>
</feature>
<proteinExistence type="inferred from homology"/>
<comment type="function">
    <text evidence="1">This protein binds specifically to 23S rRNA.</text>
</comment>
<comment type="function">
    <text evidence="1">The globular domain of the protein is located near the polypeptide exit tunnel on the outside of the subunit, while an extended beta-hairpin is found that lines the wall of the exit tunnel in the center of the 70S ribosome.</text>
</comment>
<comment type="subunit">
    <text evidence="1">Part of the 50S ribosomal subunit.</text>
</comment>
<comment type="subcellular location">
    <subcellularLocation>
        <location>Plastid</location>
        <location>Chloroplast</location>
    </subcellularLocation>
</comment>
<comment type="similarity">
    <text evidence="2">Belongs to the universal ribosomal protein uL22 family.</text>
</comment>
<evidence type="ECO:0000250" key="1"/>
<evidence type="ECO:0000305" key="2"/>